<keyword id="KW-1064">Adaptive immunity</keyword>
<keyword id="KW-0903">Direct protein sequencing</keyword>
<keyword id="KW-1015">Disulfide bond</keyword>
<keyword id="KW-0391">Immunity</keyword>
<keyword id="KW-1280">Immunoglobulin</keyword>
<keyword id="KW-1185">Reference proteome</keyword>
<organism>
    <name type="scientific">Mus musculus</name>
    <name type="common">Mouse</name>
    <dbReference type="NCBI Taxonomy" id="10090"/>
    <lineage>
        <taxon>Eukaryota</taxon>
        <taxon>Metazoa</taxon>
        <taxon>Chordata</taxon>
        <taxon>Craniata</taxon>
        <taxon>Vertebrata</taxon>
        <taxon>Euteleostomi</taxon>
        <taxon>Mammalia</taxon>
        <taxon>Eutheria</taxon>
        <taxon>Euarchontoglires</taxon>
        <taxon>Glires</taxon>
        <taxon>Rodentia</taxon>
        <taxon>Myomorpha</taxon>
        <taxon>Muroidea</taxon>
        <taxon>Muridae</taxon>
        <taxon>Murinae</taxon>
        <taxon>Mus</taxon>
        <taxon>Mus</taxon>
    </lineage>
</organism>
<comment type="miscellaneous">
    <text>This chain was isolated from a myeloma protein that binds inulin.</text>
</comment>
<evidence type="ECO:0000255" key="1">
    <source>
        <dbReference type="PROSITE-ProRule" id="PRU00114"/>
    </source>
</evidence>
<name>HVM29_MOUSE</name>
<proteinExistence type="evidence at protein level"/>
<feature type="chain" id="PRO_0000059883" description="Ig heavy chain V-III region E109">
    <location>
        <begin position="1"/>
        <end position="113" status="greater than"/>
    </location>
</feature>
<feature type="domain" description="Ig-like">
    <location>
        <begin position="1"/>
        <end position="113" status="greater than"/>
    </location>
</feature>
<feature type="disulfide bond" evidence="1">
    <location>
        <begin position="22"/>
        <end position="98"/>
    </location>
</feature>
<feature type="non-terminal residue">
    <location>
        <position position="113"/>
    </location>
</feature>
<protein>
    <recommendedName>
        <fullName>Ig heavy chain V-III region E109</fullName>
    </recommendedName>
</protein>
<reference key="1">
    <citation type="journal article" date="1978" name="Proc. Natl. Acad. Sci. U.S.A.">
        <title>Sequence variation among heavy chains from inulin-binding myeloma proteins.</title>
        <authorList>
            <person name="Vrana M."/>
            <person name="Rudikoff S."/>
            <person name="Potter M."/>
        </authorList>
    </citation>
    <scope>PROTEIN SEQUENCE</scope>
</reference>
<sequence length="113" mass="12647">EVKLEESGGGLVQPGGSMKLSCVASGFTFSNYWMNWVRQSPEKGLEWIAEIRLKSHNYATHYAESVKGRFTISRDDSKSSVFLQMNNLRAEDTGIHYCTTGFAYWGQGTLVTV</sequence>
<dbReference type="PIR" id="C93818">
    <property type="entry name" value="AVMS09"/>
</dbReference>
<dbReference type="SMR" id="P01798"/>
<dbReference type="FunCoup" id="P01798">
    <property type="interactions" value="529"/>
</dbReference>
<dbReference type="InParanoid" id="P01798"/>
<dbReference type="Proteomes" id="UP000000589">
    <property type="component" value="Unplaced"/>
</dbReference>
<dbReference type="RNAct" id="P01798">
    <property type="molecule type" value="protein"/>
</dbReference>
<dbReference type="GO" id="GO:0005576">
    <property type="term" value="C:extracellular region"/>
    <property type="evidence" value="ECO:0007669"/>
    <property type="project" value="UniProtKB-ARBA"/>
</dbReference>
<dbReference type="GO" id="GO:0019814">
    <property type="term" value="C:immunoglobulin complex"/>
    <property type="evidence" value="ECO:0007669"/>
    <property type="project" value="UniProtKB-KW"/>
</dbReference>
<dbReference type="GO" id="GO:0003823">
    <property type="term" value="F:antigen binding"/>
    <property type="evidence" value="ECO:0000318"/>
    <property type="project" value="GO_Central"/>
</dbReference>
<dbReference type="GO" id="GO:0016064">
    <property type="term" value="P:immunoglobulin mediated immune response"/>
    <property type="evidence" value="ECO:0000318"/>
    <property type="project" value="GO_Central"/>
</dbReference>
<dbReference type="CDD" id="cd04981">
    <property type="entry name" value="IgV_H"/>
    <property type="match status" value="1"/>
</dbReference>
<dbReference type="FunFam" id="2.60.40.10:FF:001372">
    <property type="entry name" value="Ig heavy chain V region M603"/>
    <property type="match status" value="1"/>
</dbReference>
<dbReference type="Gene3D" id="2.60.40.10">
    <property type="entry name" value="Immunoglobulins"/>
    <property type="match status" value="1"/>
</dbReference>
<dbReference type="InterPro" id="IPR007110">
    <property type="entry name" value="Ig-like_dom"/>
</dbReference>
<dbReference type="InterPro" id="IPR036179">
    <property type="entry name" value="Ig-like_dom_sf"/>
</dbReference>
<dbReference type="InterPro" id="IPR013783">
    <property type="entry name" value="Ig-like_fold"/>
</dbReference>
<dbReference type="InterPro" id="IPR003599">
    <property type="entry name" value="Ig_sub"/>
</dbReference>
<dbReference type="InterPro" id="IPR013106">
    <property type="entry name" value="Ig_V-set"/>
</dbReference>
<dbReference type="InterPro" id="IPR050199">
    <property type="entry name" value="IgHV"/>
</dbReference>
<dbReference type="PANTHER" id="PTHR23266">
    <property type="entry name" value="IMMUNOGLOBULIN HEAVY CHAIN"/>
    <property type="match status" value="1"/>
</dbReference>
<dbReference type="Pfam" id="PF07686">
    <property type="entry name" value="V-set"/>
    <property type="match status" value="1"/>
</dbReference>
<dbReference type="SMART" id="SM00409">
    <property type="entry name" value="IG"/>
    <property type="match status" value="1"/>
</dbReference>
<dbReference type="SMART" id="SM00406">
    <property type="entry name" value="IGv"/>
    <property type="match status" value="1"/>
</dbReference>
<dbReference type="SUPFAM" id="SSF48726">
    <property type="entry name" value="Immunoglobulin"/>
    <property type="match status" value="1"/>
</dbReference>
<dbReference type="PROSITE" id="PS50835">
    <property type="entry name" value="IG_LIKE"/>
    <property type="match status" value="1"/>
</dbReference>
<accession>P01798</accession>